<name>HMGB2_CHICK</name>
<accession>P26584</accession>
<keyword id="KW-0158">Chromosome</keyword>
<keyword id="KW-0963">Cytoplasm</keyword>
<keyword id="KW-1015">Disulfide bond</keyword>
<keyword id="KW-0233">DNA recombination</keyword>
<keyword id="KW-0238">DNA-binding</keyword>
<keyword id="KW-0391">Immunity</keyword>
<keyword id="KW-0395">Inflammatory response</keyword>
<keyword id="KW-0399">Innate immunity</keyword>
<keyword id="KW-0539">Nucleus</keyword>
<keyword id="KW-0558">Oxidation</keyword>
<keyword id="KW-1185">Reference proteome</keyword>
<keyword id="KW-0677">Repeat</keyword>
<keyword id="KW-0964">Secreted</keyword>
<keyword id="KW-0804">Transcription</keyword>
<keyword id="KW-0805">Transcription regulation</keyword>
<organism>
    <name type="scientific">Gallus gallus</name>
    <name type="common">Chicken</name>
    <dbReference type="NCBI Taxonomy" id="9031"/>
    <lineage>
        <taxon>Eukaryota</taxon>
        <taxon>Metazoa</taxon>
        <taxon>Chordata</taxon>
        <taxon>Craniata</taxon>
        <taxon>Vertebrata</taxon>
        <taxon>Euteleostomi</taxon>
        <taxon>Archelosauria</taxon>
        <taxon>Archosauria</taxon>
        <taxon>Dinosauria</taxon>
        <taxon>Saurischia</taxon>
        <taxon>Theropoda</taxon>
        <taxon>Coelurosauria</taxon>
        <taxon>Aves</taxon>
        <taxon>Neognathae</taxon>
        <taxon>Galloanserae</taxon>
        <taxon>Galliformes</taxon>
        <taxon>Phasianidae</taxon>
        <taxon>Phasianinae</taxon>
        <taxon>Gallus</taxon>
    </lineage>
</organism>
<dbReference type="EMBL" id="M83235">
    <property type="protein sequence ID" value="AAA48818.1"/>
    <property type="molecule type" value="mRNA"/>
</dbReference>
<dbReference type="EMBL" id="M80574">
    <property type="protein sequence ID" value="AAA48819.1"/>
    <property type="molecule type" value="mRNA"/>
</dbReference>
<dbReference type="PIR" id="JC1114">
    <property type="entry name" value="JC1114"/>
</dbReference>
<dbReference type="PIR" id="JC1129">
    <property type="entry name" value="JC1129"/>
</dbReference>
<dbReference type="RefSeq" id="NP_990817.1">
    <property type="nucleotide sequence ID" value="NM_205486.1"/>
</dbReference>
<dbReference type="SMR" id="P26584"/>
<dbReference type="BioGRID" id="676729">
    <property type="interactions" value="1"/>
</dbReference>
<dbReference type="FunCoup" id="P26584">
    <property type="interactions" value="2479"/>
</dbReference>
<dbReference type="STRING" id="9031.ENSGALP00000017462"/>
<dbReference type="PaxDb" id="9031-ENSGALP00000017462"/>
<dbReference type="GeneID" id="396482"/>
<dbReference type="KEGG" id="gga:396482"/>
<dbReference type="CTD" id="3148"/>
<dbReference type="VEuPathDB" id="HostDB:geneid_396482"/>
<dbReference type="eggNOG" id="KOG0381">
    <property type="taxonomic scope" value="Eukaryota"/>
</dbReference>
<dbReference type="InParanoid" id="P26584"/>
<dbReference type="OrthoDB" id="1919336at2759"/>
<dbReference type="PhylomeDB" id="P26584"/>
<dbReference type="PRO" id="PR:P26584"/>
<dbReference type="Proteomes" id="UP000000539">
    <property type="component" value="Unassembled WGS sequence"/>
</dbReference>
<dbReference type="GO" id="GO:0000793">
    <property type="term" value="C:condensed chromosome"/>
    <property type="evidence" value="ECO:0000250"/>
    <property type="project" value="UniProtKB"/>
</dbReference>
<dbReference type="GO" id="GO:0005737">
    <property type="term" value="C:cytoplasm"/>
    <property type="evidence" value="ECO:0000250"/>
    <property type="project" value="UniProtKB"/>
</dbReference>
<dbReference type="GO" id="GO:0005615">
    <property type="term" value="C:extracellular space"/>
    <property type="evidence" value="ECO:0000250"/>
    <property type="project" value="AgBase"/>
</dbReference>
<dbReference type="GO" id="GO:0005634">
    <property type="term" value="C:nucleus"/>
    <property type="evidence" value="ECO:0000250"/>
    <property type="project" value="UniProtKB"/>
</dbReference>
<dbReference type="GO" id="GO:0048471">
    <property type="term" value="C:perinuclear region of cytoplasm"/>
    <property type="evidence" value="ECO:0000250"/>
    <property type="project" value="UniProtKB"/>
</dbReference>
<dbReference type="GO" id="GO:0008301">
    <property type="term" value="F:DNA binding, bending"/>
    <property type="evidence" value="ECO:0000314"/>
    <property type="project" value="AgBase"/>
</dbReference>
<dbReference type="GO" id="GO:0000400">
    <property type="term" value="F:four-way junction DNA binding"/>
    <property type="evidence" value="ECO:0000314"/>
    <property type="project" value="AgBase"/>
</dbReference>
<dbReference type="GO" id="GO:0050829">
    <property type="term" value="P:defense response to Gram-negative bacterium"/>
    <property type="evidence" value="ECO:0000250"/>
    <property type="project" value="AgBase"/>
</dbReference>
<dbReference type="GO" id="GO:0050830">
    <property type="term" value="P:defense response to Gram-positive bacterium"/>
    <property type="evidence" value="ECO:0000250"/>
    <property type="project" value="AgBase"/>
</dbReference>
<dbReference type="GO" id="GO:0032392">
    <property type="term" value="P:DNA geometric change"/>
    <property type="evidence" value="ECO:0000314"/>
    <property type="project" value="AgBase"/>
</dbReference>
<dbReference type="GO" id="GO:0006310">
    <property type="term" value="P:DNA recombination"/>
    <property type="evidence" value="ECO:0007669"/>
    <property type="project" value="UniProtKB-KW"/>
</dbReference>
<dbReference type="GO" id="GO:0002437">
    <property type="term" value="P:inflammatory response to antigenic stimulus"/>
    <property type="evidence" value="ECO:0000250"/>
    <property type="project" value="AgBase"/>
</dbReference>
<dbReference type="GO" id="GO:0045087">
    <property type="term" value="P:innate immune response"/>
    <property type="evidence" value="ECO:0007669"/>
    <property type="project" value="UniProtKB-KW"/>
</dbReference>
<dbReference type="GO" id="GO:0006357">
    <property type="term" value="P:regulation of transcription by RNA polymerase II"/>
    <property type="evidence" value="ECO:0000250"/>
    <property type="project" value="UniProtKB"/>
</dbReference>
<dbReference type="GO" id="GO:0032496">
    <property type="term" value="P:response to lipopolysaccharide"/>
    <property type="evidence" value="ECO:0000250"/>
    <property type="project" value="AgBase"/>
</dbReference>
<dbReference type="CDD" id="cd21978">
    <property type="entry name" value="HMG-box_HMGB_rpt1"/>
    <property type="match status" value="1"/>
</dbReference>
<dbReference type="CDD" id="cd21979">
    <property type="entry name" value="HMG-box_HMGB_rpt2"/>
    <property type="match status" value="1"/>
</dbReference>
<dbReference type="FunFam" id="1.10.30.10:FF:000006">
    <property type="entry name" value="High mobility group protein B1"/>
    <property type="match status" value="1"/>
</dbReference>
<dbReference type="FunFam" id="1.10.30.10:FF:000018">
    <property type="entry name" value="High mobility group protein B2"/>
    <property type="match status" value="1"/>
</dbReference>
<dbReference type="Gene3D" id="1.10.30.10">
    <property type="entry name" value="High mobility group box domain"/>
    <property type="match status" value="2"/>
</dbReference>
<dbReference type="InterPro" id="IPR009071">
    <property type="entry name" value="HMG_box_dom"/>
</dbReference>
<dbReference type="InterPro" id="IPR036910">
    <property type="entry name" value="HMG_box_dom_sf"/>
</dbReference>
<dbReference type="InterPro" id="IPR017967">
    <property type="entry name" value="HMG_boxA_CS"/>
</dbReference>
<dbReference type="InterPro" id="IPR050342">
    <property type="entry name" value="HMGB"/>
</dbReference>
<dbReference type="PANTHER" id="PTHR48112:SF3">
    <property type="entry name" value="HIGH MOBILITY GROUP PROTEIN B2"/>
    <property type="match status" value="1"/>
</dbReference>
<dbReference type="PANTHER" id="PTHR48112">
    <property type="entry name" value="HIGH MOBILITY GROUP PROTEIN DSP1"/>
    <property type="match status" value="1"/>
</dbReference>
<dbReference type="Pfam" id="PF00505">
    <property type="entry name" value="HMG_box"/>
    <property type="match status" value="1"/>
</dbReference>
<dbReference type="Pfam" id="PF09011">
    <property type="entry name" value="HMG_box_2"/>
    <property type="match status" value="1"/>
</dbReference>
<dbReference type="PRINTS" id="PR00886">
    <property type="entry name" value="HIGHMOBLTY12"/>
</dbReference>
<dbReference type="SMART" id="SM00398">
    <property type="entry name" value="HMG"/>
    <property type="match status" value="2"/>
</dbReference>
<dbReference type="SUPFAM" id="SSF47095">
    <property type="entry name" value="HMG-box"/>
    <property type="match status" value="2"/>
</dbReference>
<dbReference type="PROSITE" id="PS00353">
    <property type="entry name" value="HMG_BOX_1"/>
    <property type="match status" value="1"/>
</dbReference>
<dbReference type="PROSITE" id="PS50118">
    <property type="entry name" value="HMG_BOX_2"/>
    <property type="match status" value="2"/>
</dbReference>
<protein>
    <recommendedName>
        <fullName>High mobility group protein B2</fullName>
    </recommendedName>
    <alternativeName>
        <fullName>High mobility group protein 2</fullName>
        <shortName>HMG-2</shortName>
    </alternativeName>
</protein>
<reference key="1">
    <citation type="journal article" date="1992" name="Gene">
        <title>Isolation of a chicken HMG2 cDNA clone and evidence for an HMG2-specific 3'-untranslated region.</title>
        <authorList>
            <person name="Davis D.L."/>
            <person name="Burch J.B.E."/>
        </authorList>
    </citation>
    <scope>NUCLEOTIDE SEQUENCE [MRNA]</scope>
</reference>
<reference key="2">
    <citation type="journal article" date="1992" name="Gene">
        <title>Sequence of a cDNA encoding chicken high-mobility-group protein-2.</title>
        <authorList>
            <person name="Sparrow D.B."/>
            <person name="Wells J.R.E."/>
        </authorList>
    </citation>
    <scope>NUCLEOTIDE SEQUENCE [MRNA]</scope>
</reference>
<reference key="3">
    <citation type="journal article" date="2003" name="Cell Res.">
        <title>The in vitro reconstitution of nucleosome and its binding patterns with HMG1/2 and HMG14/17 proteins.</title>
        <authorList>
            <person name="Zhang S.B."/>
            <person name="Huang J."/>
            <person name="Zhao H."/>
            <person name="Zhang Y."/>
            <person name="Hou C.H."/>
            <person name="Cheng X.D."/>
            <person name="Jiang C."/>
            <person name="Li M.Q."/>
            <person name="Hu J."/>
            <person name="Qian R.L."/>
        </authorList>
    </citation>
    <scope>FUNCTION</scope>
    <scope>SUBCELLULAR LOCATION</scope>
</reference>
<proteinExistence type="evidence at transcript level"/>
<sequence>MGKGDPNKPRGKMSSYAYFVQTCREEHKKKHPDSSVNFAEFSRKCSERWKTMSSKEKGKFEEMAKGDKARYDREMKNYVPPKGEKKGKKKDPNAPKRPPSAFFLFCSEHRPKIKNDHPGLSIGDTAKKLGEMWSEQLAKDKQPYEQKAAKLKEKYEKDIAAYRAKSKSDAGKKGPGRPAGSKKKAEPEEEEEEEEDEEEEEEEEDEE</sequence>
<comment type="function">
    <text evidence="2 3 4 8">Multifunctional protein with various roles in different cellular compartments. May act in a redox sensitive manner (By similarity). Associates with chromatin and binds DNA with a preference to non-canonical DNA structures such as single-stranded DNA (PubMed:14672558). Can bent DNA and enhance DNA flexibility by looping thus providing a mechanism to promote activities on various gene promoters. Proposed to be involved in the innate immune response to nucleic acids by acting as a cytoplasmic promiscuous immunogenic DNA/RNA sensor. Involved in inflammatory response to antigenic stimulus coupled with pro-inflammatory activity (By similarity).</text>
</comment>
<comment type="subcellular location">
    <subcellularLocation>
        <location evidence="8">Nucleus</location>
    </subcellularLocation>
    <subcellularLocation>
        <location evidence="9">Chromosome</location>
    </subcellularLocation>
    <subcellularLocation>
        <location evidence="9">Cytoplasm</location>
    </subcellularLocation>
    <subcellularLocation>
        <location evidence="9">Secreted</location>
    </subcellularLocation>
</comment>
<comment type="PTM">
    <text evidence="2">Reduction/oxidation of cysteine residues Cys-23, Cys-45 and Cys-106 and a possible intramolecular disulfide bond involving Cys-23 and Cys-45 give rise to different redox forms with specific functional activities in various cellular compartments: 1- fully reduced HMGB2 (HMGB2C23hC45hC106h), 2- disulfide HMGB2 (HMGB2C23-C45C106h) and 3- sulfonyl HMGB2 (HMGB2C23soC45soC106so).</text>
</comment>
<comment type="similarity">
    <text evidence="9">Belongs to the HMGB family.</text>
</comment>
<gene>
    <name type="primary">HMGB2</name>
    <name type="synonym">HMG2</name>
</gene>
<evidence type="ECO:0000250" key="1"/>
<evidence type="ECO:0000250" key="2">
    <source>
        <dbReference type="UniProtKB" id="P09429"/>
    </source>
</evidence>
<evidence type="ECO:0000250" key="3">
    <source>
        <dbReference type="UniProtKB" id="P26583"/>
    </source>
</evidence>
<evidence type="ECO:0000250" key="4">
    <source>
        <dbReference type="UniProtKB" id="P30681"/>
    </source>
</evidence>
<evidence type="ECO:0000250" key="5">
    <source>
        <dbReference type="UniProtKB" id="P63159"/>
    </source>
</evidence>
<evidence type="ECO:0000255" key="6">
    <source>
        <dbReference type="PROSITE-ProRule" id="PRU00267"/>
    </source>
</evidence>
<evidence type="ECO:0000256" key="7">
    <source>
        <dbReference type="SAM" id="MobiDB-lite"/>
    </source>
</evidence>
<evidence type="ECO:0000269" key="8">
    <source>
    </source>
</evidence>
<evidence type="ECO:0000305" key="9"/>
<feature type="initiator methionine" description="Removed" evidence="1">
    <location>
        <position position="1"/>
    </location>
</feature>
<feature type="chain" id="PRO_0000048538" description="High mobility group protein B2">
    <location>
        <begin position="2"/>
        <end position="207"/>
    </location>
</feature>
<feature type="DNA-binding region" description="HMG box 1" evidence="6">
    <location>
        <begin position="9"/>
        <end position="79"/>
    </location>
</feature>
<feature type="DNA-binding region" description="HMG box 2" evidence="6">
    <location>
        <begin position="95"/>
        <end position="163"/>
    </location>
</feature>
<feature type="region of interest" description="Disordered" evidence="7">
    <location>
        <begin position="52"/>
        <end position="102"/>
    </location>
</feature>
<feature type="region of interest" description="Disordered" evidence="7">
    <location>
        <begin position="162"/>
        <end position="207"/>
    </location>
</feature>
<feature type="compositionally biased region" description="Basic and acidic residues" evidence="7">
    <location>
        <begin position="52"/>
        <end position="76"/>
    </location>
</feature>
<feature type="compositionally biased region" description="Basic and acidic residues" evidence="7">
    <location>
        <begin position="162"/>
        <end position="172"/>
    </location>
</feature>
<feature type="compositionally biased region" description="Acidic residues" evidence="7">
    <location>
        <begin position="187"/>
        <end position="207"/>
    </location>
</feature>
<feature type="modified residue" description="Cysteine sulfonic acid (-SO3H); alternate" evidence="5">
    <location>
        <position position="23"/>
    </location>
</feature>
<feature type="modified residue" description="Cysteine sulfonic acid (-SO3H); alternate" evidence="5">
    <location>
        <position position="45"/>
    </location>
</feature>
<feature type="modified residue" description="Cysteine sulfonic acid (-SO3H)" evidence="5">
    <location>
        <position position="106"/>
    </location>
</feature>
<feature type="disulfide bond" description="In disulfide HMGB2" evidence="5">
    <location>
        <begin position="23"/>
        <end position="45"/>
    </location>
</feature>
<feature type="sequence conflict" description="In Ref. 2; AAA48819." evidence="9" ref="2">
    <original>RE</original>
    <variation>PR</variation>
    <location>
        <begin position="24"/>
        <end position="25"/>
    </location>
</feature>
<feature type="sequence conflict" description="In Ref. 2; AAA48819." evidence="9" ref="2">
    <original>L</original>
    <variation>S</variation>
    <location>
        <position position="137"/>
    </location>
</feature>